<sequence>MVRRLLALSRPLYWLYEQRLLREVKRGPMPRHLGLILDGNRRYARALGLSPTKGHEFGVQKAYEVLEWCLEMGIKTVTVWVFSTDNFKRPPEEVETLMNLFLREAERMAEDHRILEHQVRVRFIGRREGFSPEVVRAIERLERRTEGHRGMFLNIALGYGGREEIVDAVKRLLLEAEARGLSPKEVAEGLTPEDIARHLYTAGLPDPDFIIRTSGEIRLSGFLLWQSAYSEFYFADVLWPEFRKIDFLRALRSYQARERRFGR</sequence>
<dbReference type="EC" id="2.5.1.-" evidence="1"/>
<dbReference type="EMBL" id="AB018379">
    <property type="protein sequence ID" value="BAA33784.1"/>
    <property type="molecule type" value="Genomic_DNA"/>
</dbReference>
<dbReference type="EMBL" id="AE017221">
    <property type="protein sequence ID" value="AAS81893.1"/>
    <property type="molecule type" value="Genomic_DNA"/>
</dbReference>
<dbReference type="PIR" id="T51169">
    <property type="entry name" value="T51169"/>
</dbReference>
<dbReference type="RefSeq" id="WP_011173925.1">
    <property type="nucleotide sequence ID" value="NC_005835.1"/>
</dbReference>
<dbReference type="SMR" id="O87197"/>
<dbReference type="KEGG" id="tth:TT_C1551"/>
<dbReference type="eggNOG" id="COG0020">
    <property type="taxonomic scope" value="Bacteria"/>
</dbReference>
<dbReference type="HOGENOM" id="CLU_038505_2_0_0"/>
<dbReference type="OrthoDB" id="4191603at2"/>
<dbReference type="Proteomes" id="UP000000592">
    <property type="component" value="Chromosome"/>
</dbReference>
<dbReference type="GO" id="GO:0045547">
    <property type="term" value="F:ditrans,polycis-polyprenyl diphosphate synthase [(2E,6E)-farnesyl diphosphate specific] activity"/>
    <property type="evidence" value="ECO:0007669"/>
    <property type="project" value="TreeGrafter"/>
</dbReference>
<dbReference type="GO" id="GO:0000287">
    <property type="term" value="F:magnesium ion binding"/>
    <property type="evidence" value="ECO:0007669"/>
    <property type="project" value="UniProtKB-UniRule"/>
</dbReference>
<dbReference type="GO" id="GO:0016094">
    <property type="term" value="P:polyprenol biosynthetic process"/>
    <property type="evidence" value="ECO:0007669"/>
    <property type="project" value="TreeGrafter"/>
</dbReference>
<dbReference type="CDD" id="cd00475">
    <property type="entry name" value="Cis_IPPS"/>
    <property type="match status" value="1"/>
</dbReference>
<dbReference type="FunFam" id="3.40.1180.10:FF:000003">
    <property type="entry name" value="Isoprenyl transferase 2"/>
    <property type="match status" value="1"/>
</dbReference>
<dbReference type="Gene3D" id="3.40.1180.10">
    <property type="entry name" value="Decaprenyl diphosphate synthase-like"/>
    <property type="match status" value="1"/>
</dbReference>
<dbReference type="HAMAP" id="MF_01139">
    <property type="entry name" value="ISPT"/>
    <property type="match status" value="1"/>
</dbReference>
<dbReference type="InterPro" id="IPR001441">
    <property type="entry name" value="UPP_synth-like"/>
</dbReference>
<dbReference type="InterPro" id="IPR018520">
    <property type="entry name" value="UPP_synth-like_CS"/>
</dbReference>
<dbReference type="InterPro" id="IPR036424">
    <property type="entry name" value="UPP_synth-like_sf"/>
</dbReference>
<dbReference type="NCBIfam" id="NF011409">
    <property type="entry name" value="PRK14835.1"/>
    <property type="match status" value="1"/>
</dbReference>
<dbReference type="NCBIfam" id="TIGR00055">
    <property type="entry name" value="uppS"/>
    <property type="match status" value="1"/>
</dbReference>
<dbReference type="PANTHER" id="PTHR10291:SF43">
    <property type="entry name" value="DEHYDRODOLICHYL DIPHOSPHATE SYNTHASE COMPLEX SUBUNIT DHDDS"/>
    <property type="match status" value="1"/>
</dbReference>
<dbReference type="PANTHER" id="PTHR10291">
    <property type="entry name" value="DEHYDRODOLICHYL DIPHOSPHATE SYNTHASE FAMILY MEMBER"/>
    <property type="match status" value="1"/>
</dbReference>
<dbReference type="Pfam" id="PF01255">
    <property type="entry name" value="Prenyltransf"/>
    <property type="match status" value="1"/>
</dbReference>
<dbReference type="SUPFAM" id="SSF64005">
    <property type="entry name" value="Undecaprenyl diphosphate synthase"/>
    <property type="match status" value="1"/>
</dbReference>
<dbReference type="PROSITE" id="PS01066">
    <property type="entry name" value="UPP_SYNTHASE"/>
    <property type="match status" value="1"/>
</dbReference>
<evidence type="ECO:0000255" key="1">
    <source>
        <dbReference type="HAMAP-Rule" id="MF_01139"/>
    </source>
</evidence>
<name>ISPT_THET2</name>
<protein>
    <recommendedName>
        <fullName evidence="1">Isoprenyl transferase</fullName>
        <ecNumber evidence="1">2.5.1.-</ecNumber>
    </recommendedName>
</protein>
<comment type="function">
    <text evidence="1">Catalyzes the condensation of isopentenyl diphosphate (IPP) with allylic pyrophosphates generating different type of terpenoids.</text>
</comment>
<comment type="cofactor">
    <cofactor evidence="1">
        <name>Mg(2+)</name>
        <dbReference type="ChEBI" id="CHEBI:18420"/>
    </cofactor>
    <text evidence="1">Binds 2 magnesium ions per subunit.</text>
</comment>
<comment type="subunit">
    <text evidence="1">Homodimer.</text>
</comment>
<comment type="similarity">
    <text evidence="1">Belongs to the UPP synthase family.</text>
</comment>
<proteinExistence type="inferred from homology"/>
<reference key="1">
    <citation type="journal article" date="1998" name="FEMS Microbiol. Lett.">
        <title>Lysine is synthesized through the alpha-aminoadipate pathway in Thermus thermophilus.</title>
        <authorList>
            <person name="Kosuge T."/>
            <person name="Hoshino T."/>
        </authorList>
    </citation>
    <scope>NUCLEOTIDE SEQUENCE [GENOMIC DNA]</scope>
</reference>
<reference key="2">
    <citation type="journal article" date="2004" name="Nat. Biotechnol.">
        <title>The genome sequence of the extreme thermophile Thermus thermophilus.</title>
        <authorList>
            <person name="Henne A."/>
            <person name="Brueggemann H."/>
            <person name="Raasch C."/>
            <person name="Wiezer A."/>
            <person name="Hartsch T."/>
            <person name="Liesegang H."/>
            <person name="Johann A."/>
            <person name="Lienard T."/>
            <person name="Gohl O."/>
            <person name="Martinez-Arias R."/>
            <person name="Jacobi C."/>
            <person name="Starkuviene V."/>
            <person name="Schlenczeck S."/>
            <person name="Dencker S."/>
            <person name="Huber R."/>
            <person name="Klenk H.-P."/>
            <person name="Kramer W."/>
            <person name="Merkl R."/>
            <person name="Gottschalk G."/>
            <person name="Fritz H.-J."/>
        </authorList>
    </citation>
    <scope>NUCLEOTIDE SEQUENCE [LARGE SCALE GENOMIC DNA]</scope>
    <source>
        <strain>ATCC BAA-163 / DSM 7039 / HB27</strain>
    </source>
</reference>
<feature type="chain" id="PRO_0000123702" description="Isoprenyl transferase">
    <location>
        <begin position="1"/>
        <end position="263"/>
    </location>
</feature>
<feature type="active site" evidence="1">
    <location>
        <position position="38"/>
    </location>
</feature>
<feature type="active site" description="Proton acceptor" evidence="1">
    <location>
        <position position="86"/>
    </location>
</feature>
<feature type="binding site" evidence="1">
    <location>
        <position position="38"/>
    </location>
    <ligand>
        <name>Mg(2+)</name>
        <dbReference type="ChEBI" id="CHEBI:18420"/>
    </ligand>
</feature>
<feature type="binding site" evidence="1">
    <location>
        <begin position="39"/>
        <end position="42"/>
    </location>
    <ligand>
        <name>substrate</name>
    </ligand>
</feature>
<feature type="binding site" evidence="1">
    <location>
        <position position="55"/>
    </location>
    <ligand>
        <name>substrate</name>
    </ligand>
</feature>
<feature type="binding site" evidence="1">
    <location>
        <begin position="83"/>
        <end position="85"/>
    </location>
    <ligand>
        <name>substrate</name>
    </ligand>
</feature>
<feature type="binding site" evidence="1">
    <location>
        <position position="87"/>
    </location>
    <ligand>
        <name>substrate</name>
    </ligand>
</feature>
<feature type="binding site" evidence="1">
    <location>
        <position position="89"/>
    </location>
    <ligand>
        <name>substrate</name>
    </ligand>
</feature>
<feature type="binding site" evidence="1">
    <location>
        <position position="212"/>
    </location>
    <ligand>
        <name>substrate</name>
    </ligand>
</feature>
<feature type="binding site" evidence="1">
    <location>
        <begin position="218"/>
        <end position="220"/>
    </location>
    <ligand>
        <name>substrate</name>
    </ligand>
</feature>
<feature type="binding site" evidence="1">
    <location>
        <position position="231"/>
    </location>
    <ligand>
        <name>Mg(2+)</name>
        <dbReference type="ChEBI" id="CHEBI:18420"/>
    </ligand>
</feature>
<accession>O87197</accession>
<gene>
    <name evidence="1" type="primary">uppS</name>
    <name type="ordered locus">TT_C1551</name>
</gene>
<keyword id="KW-0460">Magnesium</keyword>
<keyword id="KW-0479">Metal-binding</keyword>
<keyword id="KW-0808">Transferase</keyword>
<organism>
    <name type="scientific">Thermus thermophilus (strain ATCC BAA-163 / DSM 7039 / HB27)</name>
    <dbReference type="NCBI Taxonomy" id="262724"/>
    <lineage>
        <taxon>Bacteria</taxon>
        <taxon>Thermotogati</taxon>
        <taxon>Deinococcota</taxon>
        <taxon>Deinococci</taxon>
        <taxon>Thermales</taxon>
        <taxon>Thermaceae</taxon>
        <taxon>Thermus</taxon>
    </lineage>
</organism>